<gene>
    <name evidence="1" type="primary">pepQ</name>
    <name type="ordered locus">SPC_4091</name>
</gene>
<protein>
    <recommendedName>
        <fullName evidence="1">Xaa-Pro dipeptidase</fullName>
        <shortName evidence="1">X-Pro dipeptidase</shortName>
        <ecNumber evidence="1">3.4.13.9</ecNumber>
    </recommendedName>
    <alternativeName>
        <fullName evidence="1">Imidodipeptidase</fullName>
    </alternativeName>
    <alternativeName>
        <fullName evidence="1">Proline dipeptidase</fullName>
        <shortName evidence="1">Prolidase</shortName>
    </alternativeName>
</protein>
<sequence length="443" mass="50170">MESLAALYKNHIVTLQERTRDVLARFKLDALLIHSGELFNVFLDDHPYPFKVNPQFKAWVPVTQVPNCWLLVDGVNKPKLWFYLPVDYWHNVEPLPTSFWTEEVEVVALPKADGIGSQLPAARGNIGYIGPVPERALQLDIAASNINPKGVIDYLHYYRAYKTDYELACMREAQKMAVSGHRAAEEAFRSGMSEFDINLAYLTATGHRDTDVPYSNIVALNEHAAVLHYTKLDHQAPSEMRSFLLDAGAEYNGYAADLTRTWSAKSDNDYAHLVKDVNDEQLALIATMKAGVSYVDYHIQFHQRIAKLLRKHQIITDMSEEAMVENDLTGPFMPHGIGHPLGLQVHDVAGFMQDDSGTHLAAPSKYPYLRCTRVLQPRMVLTIEPGIYFIESLLAPWREGPFSKHFNWQKIEALKPFGGIRIEDNVVIHENGVENMTRDLKLA</sequence>
<comment type="function">
    <text evidence="1">Splits dipeptides with a prolyl residue in the C-terminal position.</text>
</comment>
<comment type="catalytic activity">
    <reaction evidence="1">
        <text>Xaa-L-Pro dipeptide + H2O = an L-alpha-amino acid + L-proline</text>
        <dbReference type="Rhea" id="RHEA:76407"/>
        <dbReference type="ChEBI" id="CHEBI:15377"/>
        <dbReference type="ChEBI" id="CHEBI:59869"/>
        <dbReference type="ChEBI" id="CHEBI:60039"/>
        <dbReference type="ChEBI" id="CHEBI:195196"/>
        <dbReference type="EC" id="3.4.13.9"/>
    </reaction>
</comment>
<comment type="cofactor">
    <cofactor evidence="1">
        <name>Mn(2+)</name>
        <dbReference type="ChEBI" id="CHEBI:29035"/>
    </cofactor>
    <text evidence="1">Binds 2 manganese ions per subunit.</text>
</comment>
<comment type="similarity">
    <text evidence="1">Belongs to the peptidase M24B family. Bacterial-type prolidase subfamily.</text>
</comment>
<evidence type="ECO:0000255" key="1">
    <source>
        <dbReference type="HAMAP-Rule" id="MF_01279"/>
    </source>
</evidence>
<name>PEPQ_SALPC</name>
<accession>C0Q3F4</accession>
<dbReference type="EC" id="3.4.13.9" evidence="1"/>
<dbReference type="EMBL" id="CP000857">
    <property type="protein sequence ID" value="ACN48156.1"/>
    <property type="molecule type" value="Genomic_DNA"/>
</dbReference>
<dbReference type="RefSeq" id="WP_000444529.1">
    <property type="nucleotide sequence ID" value="NC_012125.1"/>
</dbReference>
<dbReference type="SMR" id="C0Q3F4"/>
<dbReference type="MEROPS" id="M24.003"/>
<dbReference type="KEGG" id="sei:SPC_4091"/>
<dbReference type="HOGENOM" id="CLU_050675_0_0_6"/>
<dbReference type="Proteomes" id="UP000001599">
    <property type="component" value="Chromosome"/>
</dbReference>
<dbReference type="GO" id="GO:0005829">
    <property type="term" value="C:cytosol"/>
    <property type="evidence" value="ECO:0007669"/>
    <property type="project" value="TreeGrafter"/>
</dbReference>
<dbReference type="GO" id="GO:0004177">
    <property type="term" value="F:aminopeptidase activity"/>
    <property type="evidence" value="ECO:0007669"/>
    <property type="project" value="TreeGrafter"/>
</dbReference>
<dbReference type="GO" id="GO:0046872">
    <property type="term" value="F:metal ion binding"/>
    <property type="evidence" value="ECO:0007669"/>
    <property type="project" value="UniProtKB-KW"/>
</dbReference>
<dbReference type="GO" id="GO:0008235">
    <property type="term" value="F:metalloexopeptidase activity"/>
    <property type="evidence" value="ECO:0007669"/>
    <property type="project" value="UniProtKB-UniRule"/>
</dbReference>
<dbReference type="GO" id="GO:0016795">
    <property type="term" value="F:phosphoric triester hydrolase activity"/>
    <property type="evidence" value="ECO:0007669"/>
    <property type="project" value="InterPro"/>
</dbReference>
<dbReference type="GO" id="GO:0102009">
    <property type="term" value="F:proline dipeptidase activity"/>
    <property type="evidence" value="ECO:0007669"/>
    <property type="project" value="UniProtKB-EC"/>
</dbReference>
<dbReference type="GO" id="GO:0006508">
    <property type="term" value="P:proteolysis"/>
    <property type="evidence" value="ECO:0007669"/>
    <property type="project" value="UniProtKB-KW"/>
</dbReference>
<dbReference type="CDD" id="cd01087">
    <property type="entry name" value="Prolidase"/>
    <property type="match status" value="1"/>
</dbReference>
<dbReference type="FunFam" id="3.40.350.10:FF:000002">
    <property type="entry name" value="Xaa-Pro dipeptidase"/>
    <property type="match status" value="1"/>
</dbReference>
<dbReference type="FunFam" id="3.90.230.10:FF:000006">
    <property type="entry name" value="Xaa-Pro dipeptidase"/>
    <property type="match status" value="1"/>
</dbReference>
<dbReference type="Gene3D" id="3.90.230.10">
    <property type="entry name" value="Creatinase/methionine aminopeptidase superfamily"/>
    <property type="match status" value="1"/>
</dbReference>
<dbReference type="Gene3D" id="3.40.350.10">
    <property type="entry name" value="Creatinase/prolidase N-terminal domain"/>
    <property type="match status" value="1"/>
</dbReference>
<dbReference type="HAMAP" id="MF_01279">
    <property type="entry name" value="X_Pro_dipeptid"/>
    <property type="match status" value="1"/>
</dbReference>
<dbReference type="InterPro" id="IPR029149">
    <property type="entry name" value="Creatin/AminoP/Spt16_N"/>
</dbReference>
<dbReference type="InterPro" id="IPR036005">
    <property type="entry name" value="Creatinase/aminopeptidase-like"/>
</dbReference>
<dbReference type="InterPro" id="IPR048819">
    <property type="entry name" value="PepQ_N"/>
</dbReference>
<dbReference type="InterPro" id="IPR000994">
    <property type="entry name" value="Pept_M24"/>
</dbReference>
<dbReference type="InterPro" id="IPR001131">
    <property type="entry name" value="Peptidase_M24B_aminopep-P_CS"/>
</dbReference>
<dbReference type="InterPro" id="IPR052433">
    <property type="entry name" value="X-Pro_dipept-like"/>
</dbReference>
<dbReference type="InterPro" id="IPR022846">
    <property type="entry name" value="X_Pro_dipept"/>
</dbReference>
<dbReference type="NCBIfam" id="NF010133">
    <property type="entry name" value="PRK13607.1"/>
    <property type="match status" value="1"/>
</dbReference>
<dbReference type="PANTHER" id="PTHR43226">
    <property type="entry name" value="XAA-PRO AMINOPEPTIDASE 3"/>
    <property type="match status" value="1"/>
</dbReference>
<dbReference type="PANTHER" id="PTHR43226:SF8">
    <property type="entry name" value="XAA-PRO DIPEPTIDASE"/>
    <property type="match status" value="1"/>
</dbReference>
<dbReference type="Pfam" id="PF21216">
    <property type="entry name" value="PepQ_N"/>
    <property type="match status" value="1"/>
</dbReference>
<dbReference type="Pfam" id="PF00557">
    <property type="entry name" value="Peptidase_M24"/>
    <property type="match status" value="1"/>
</dbReference>
<dbReference type="SUPFAM" id="SSF55920">
    <property type="entry name" value="Creatinase/aminopeptidase"/>
    <property type="match status" value="1"/>
</dbReference>
<dbReference type="PROSITE" id="PS00491">
    <property type="entry name" value="PROLINE_PEPTIDASE"/>
    <property type="match status" value="1"/>
</dbReference>
<keyword id="KW-0224">Dipeptidase</keyword>
<keyword id="KW-0378">Hydrolase</keyword>
<keyword id="KW-0464">Manganese</keyword>
<keyword id="KW-0479">Metal-binding</keyword>
<keyword id="KW-0482">Metalloprotease</keyword>
<keyword id="KW-0645">Protease</keyword>
<organism>
    <name type="scientific">Salmonella paratyphi C (strain RKS4594)</name>
    <dbReference type="NCBI Taxonomy" id="476213"/>
    <lineage>
        <taxon>Bacteria</taxon>
        <taxon>Pseudomonadati</taxon>
        <taxon>Pseudomonadota</taxon>
        <taxon>Gammaproteobacteria</taxon>
        <taxon>Enterobacterales</taxon>
        <taxon>Enterobacteriaceae</taxon>
        <taxon>Salmonella</taxon>
    </lineage>
</organism>
<reference key="1">
    <citation type="journal article" date="2009" name="PLoS ONE">
        <title>Salmonella paratyphi C: genetic divergence from Salmonella choleraesuis and pathogenic convergence with Salmonella typhi.</title>
        <authorList>
            <person name="Liu W.-Q."/>
            <person name="Feng Y."/>
            <person name="Wang Y."/>
            <person name="Zou Q.-H."/>
            <person name="Chen F."/>
            <person name="Guo J.-T."/>
            <person name="Peng Y.-H."/>
            <person name="Jin Y."/>
            <person name="Li Y.-G."/>
            <person name="Hu S.-N."/>
            <person name="Johnston R.N."/>
            <person name="Liu G.-R."/>
            <person name="Liu S.-L."/>
        </authorList>
    </citation>
    <scope>NUCLEOTIDE SEQUENCE [LARGE SCALE GENOMIC DNA]</scope>
    <source>
        <strain>RKS4594</strain>
    </source>
</reference>
<proteinExistence type="inferred from homology"/>
<feature type="chain" id="PRO_1000165229" description="Xaa-Pro dipeptidase">
    <location>
        <begin position="1"/>
        <end position="443"/>
    </location>
</feature>
<feature type="binding site" evidence="1">
    <location>
        <position position="246"/>
    </location>
    <ligand>
        <name>Mn(2+)</name>
        <dbReference type="ChEBI" id="CHEBI:29035"/>
        <label>2</label>
    </ligand>
</feature>
<feature type="binding site" evidence="1">
    <location>
        <position position="257"/>
    </location>
    <ligand>
        <name>Mn(2+)</name>
        <dbReference type="ChEBI" id="CHEBI:29035"/>
        <label>1</label>
    </ligand>
</feature>
<feature type="binding site" evidence="1">
    <location>
        <position position="257"/>
    </location>
    <ligand>
        <name>Mn(2+)</name>
        <dbReference type="ChEBI" id="CHEBI:29035"/>
        <label>2</label>
    </ligand>
</feature>
<feature type="binding site" evidence="1">
    <location>
        <position position="339"/>
    </location>
    <ligand>
        <name>Mn(2+)</name>
        <dbReference type="ChEBI" id="CHEBI:29035"/>
        <label>1</label>
    </ligand>
</feature>
<feature type="binding site" evidence="1">
    <location>
        <position position="384"/>
    </location>
    <ligand>
        <name>Mn(2+)</name>
        <dbReference type="ChEBI" id="CHEBI:29035"/>
        <label>1</label>
    </ligand>
</feature>
<feature type="binding site" evidence="1">
    <location>
        <position position="423"/>
    </location>
    <ligand>
        <name>Mn(2+)</name>
        <dbReference type="ChEBI" id="CHEBI:29035"/>
        <label>1</label>
    </ligand>
</feature>
<feature type="binding site" evidence="1">
    <location>
        <position position="423"/>
    </location>
    <ligand>
        <name>Mn(2+)</name>
        <dbReference type="ChEBI" id="CHEBI:29035"/>
        <label>2</label>
    </ligand>
</feature>